<accession>C0ZX05</accession>
<reference key="1">
    <citation type="submission" date="2005-03" db="EMBL/GenBank/DDBJ databases">
        <title>Comparison of the complete genome sequences of Rhodococcus erythropolis PR4 and Rhodococcus opacus B4.</title>
        <authorList>
            <person name="Takarada H."/>
            <person name="Sekine M."/>
            <person name="Hosoyama A."/>
            <person name="Yamada R."/>
            <person name="Fujisawa T."/>
            <person name="Omata S."/>
            <person name="Shimizu A."/>
            <person name="Tsukatani N."/>
            <person name="Tanikawa S."/>
            <person name="Fujita N."/>
            <person name="Harayama S."/>
        </authorList>
    </citation>
    <scope>NUCLEOTIDE SEQUENCE [LARGE SCALE GENOMIC DNA]</scope>
    <source>
        <strain>PR4 / NBRC 100887</strain>
    </source>
</reference>
<keyword id="KW-0028">Amino-acid biosynthesis</keyword>
<keyword id="KW-0057">Aromatic amino acid biosynthesis</keyword>
<keyword id="KW-0963">Cytoplasm</keyword>
<keyword id="KW-0808">Transferase</keyword>
<comment type="function">
    <text evidence="1">Catalyzes the transfer of the enolpyruvyl moiety of phosphoenolpyruvate (PEP) to the 5-hydroxyl of shikimate-3-phosphate (S3P) to produce enolpyruvyl shikimate-3-phosphate and inorganic phosphate.</text>
</comment>
<comment type="catalytic activity">
    <reaction evidence="1">
        <text>3-phosphoshikimate + phosphoenolpyruvate = 5-O-(1-carboxyvinyl)-3-phosphoshikimate + phosphate</text>
        <dbReference type="Rhea" id="RHEA:21256"/>
        <dbReference type="ChEBI" id="CHEBI:43474"/>
        <dbReference type="ChEBI" id="CHEBI:57701"/>
        <dbReference type="ChEBI" id="CHEBI:58702"/>
        <dbReference type="ChEBI" id="CHEBI:145989"/>
        <dbReference type="EC" id="2.5.1.19"/>
    </reaction>
    <physiologicalReaction direction="left-to-right" evidence="1">
        <dbReference type="Rhea" id="RHEA:21257"/>
    </physiologicalReaction>
</comment>
<comment type="pathway">
    <text evidence="1">Metabolic intermediate biosynthesis; chorismate biosynthesis; chorismate from D-erythrose 4-phosphate and phosphoenolpyruvate: step 6/7.</text>
</comment>
<comment type="subunit">
    <text evidence="1">Monomer.</text>
</comment>
<comment type="subcellular location">
    <subcellularLocation>
        <location evidence="1">Cytoplasm</location>
    </subcellularLocation>
</comment>
<comment type="similarity">
    <text evidence="1">Belongs to the EPSP synthase family.</text>
</comment>
<proteinExistence type="inferred from homology"/>
<evidence type="ECO:0000255" key="1">
    <source>
        <dbReference type="HAMAP-Rule" id="MF_00210"/>
    </source>
</evidence>
<name>AROA_RHOE4</name>
<organism>
    <name type="scientific">Rhodococcus erythropolis (strain PR4 / NBRC 100887)</name>
    <dbReference type="NCBI Taxonomy" id="234621"/>
    <lineage>
        <taxon>Bacteria</taxon>
        <taxon>Bacillati</taxon>
        <taxon>Actinomycetota</taxon>
        <taxon>Actinomycetes</taxon>
        <taxon>Mycobacteriales</taxon>
        <taxon>Nocardiaceae</taxon>
        <taxon>Rhodococcus</taxon>
        <taxon>Rhodococcus erythropolis group</taxon>
    </lineage>
</organism>
<gene>
    <name evidence="1" type="primary">aroA</name>
    <name type="ordered locus">RER_21820</name>
</gene>
<feature type="chain" id="PRO_1000204169" description="3-phosphoshikimate 1-carboxyvinyltransferase">
    <location>
        <begin position="1"/>
        <end position="437"/>
    </location>
</feature>
<feature type="active site" description="Proton acceptor" evidence="1">
    <location>
        <position position="316"/>
    </location>
</feature>
<feature type="binding site" evidence="1">
    <location>
        <position position="28"/>
    </location>
    <ligand>
        <name>3-phosphoshikimate</name>
        <dbReference type="ChEBI" id="CHEBI:145989"/>
    </ligand>
</feature>
<feature type="binding site" evidence="1">
    <location>
        <position position="28"/>
    </location>
    <ligand>
        <name>phosphoenolpyruvate</name>
        <dbReference type="ChEBI" id="CHEBI:58702"/>
    </ligand>
</feature>
<feature type="binding site" evidence="1">
    <location>
        <position position="29"/>
    </location>
    <ligand>
        <name>3-phosphoshikimate</name>
        <dbReference type="ChEBI" id="CHEBI:145989"/>
    </ligand>
</feature>
<feature type="binding site" evidence="1">
    <location>
        <position position="33"/>
    </location>
    <ligand>
        <name>3-phosphoshikimate</name>
        <dbReference type="ChEBI" id="CHEBI:145989"/>
    </ligand>
</feature>
<feature type="binding site" evidence="1">
    <location>
        <position position="97"/>
    </location>
    <ligand>
        <name>phosphoenolpyruvate</name>
        <dbReference type="ChEBI" id="CHEBI:58702"/>
    </ligand>
</feature>
<feature type="binding site" evidence="1">
    <location>
        <position position="125"/>
    </location>
    <ligand>
        <name>phosphoenolpyruvate</name>
        <dbReference type="ChEBI" id="CHEBI:58702"/>
    </ligand>
</feature>
<feature type="binding site" evidence="1">
    <location>
        <position position="168"/>
    </location>
    <ligand>
        <name>3-phosphoshikimate</name>
        <dbReference type="ChEBI" id="CHEBI:145989"/>
    </ligand>
</feature>
<feature type="binding site" evidence="1">
    <location>
        <position position="169"/>
    </location>
    <ligand>
        <name>3-phosphoshikimate</name>
        <dbReference type="ChEBI" id="CHEBI:145989"/>
    </ligand>
</feature>
<feature type="binding site" evidence="1">
    <location>
        <position position="170"/>
    </location>
    <ligand>
        <name>3-phosphoshikimate</name>
        <dbReference type="ChEBI" id="CHEBI:145989"/>
    </ligand>
</feature>
<feature type="binding site" evidence="1">
    <location>
        <position position="170"/>
    </location>
    <ligand>
        <name>phosphoenolpyruvate</name>
        <dbReference type="ChEBI" id="CHEBI:58702"/>
    </ligand>
</feature>
<feature type="binding site" evidence="1">
    <location>
        <position position="316"/>
    </location>
    <ligand>
        <name>3-phosphoshikimate</name>
        <dbReference type="ChEBI" id="CHEBI:145989"/>
    </ligand>
</feature>
<feature type="binding site" evidence="1">
    <location>
        <position position="343"/>
    </location>
    <ligand>
        <name>3-phosphoshikimate</name>
        <dbReference type="ChEBI" id="CHEBI:145989"/>
    </ligand>
</feature>
<feature type="binding site" evidence="1">
    <location>
        <position position="347"/>
    </location>
    <ligand>
        <name>phosphoenolpyruvate</name>
        <dbReference type="ChEBI" id="CHEBI:58702"/>
    </ligand>
</feature>
<feature type="binding site" evidence="1">
    <location>
        <position position="388"/>
    </location>
    <ligand>
        <name>phosphoenolpyruvate</name>
        <dbReference type="ChEBI" id="CHEBI:58702"/>
    </ligand>
</feature>
<feature type="binding site" evidence="1">
    <location>
        <position position="413"/>
    </location>
    <ligand>
        <name>phosphoenolpyruvate</name>
        <dbReference type="ChEBI" id="CHEBI:58702"/>
    </ligand>
</feature>
<dbReference type="EC" id="2.5.1.19" evidence="1"/>
<dbReference type="EMBL" id="AP008957">
    <property type="protein sequence ID" value="BAH32890.1"/>
    <property type="molecule type" value="Genomic_DNA"/>
</dbReference>
<dbReference type="RefSeq" id="WP_019747791.1">
    <property type="nucleotide sequence ID" value="NC_012490.1"/>
</dbReference>
<dbReference type="SMR" id="C0ZX05"/>
<dbReference type="KEGG" id="rer:RER_21820"/>
<dbReference type="eggNOG" id="COG0128">
    <property type="taxonomic scope" value="Bacteria"/>
</dbReference>
<dbReference type="HOGENOM" id="CLU_024321_0_0_11"/>
<dbReference type="UniPathway" id="UPA00053">
    <property type="reaction ID" value="UER00089"/>
</dbReference>
<dbReference type="Proteomes" id="UP000002204">
    <property type="component" value="Chromosome"/>
</dbReference>
<dbReference type="GO" id="GO:0005737">
    <property type="term" value="C:cytoplasm"/>
    <property type="evidence" value="ECO:0007669"/>
    <property type="project" value="UniProtKB-SubCell"/>
</dbReference>
<dbReference type="GO" id="GO:0003866">
    <property type="term" value="F:3-phosphoshikimate 1-carboxyvinyltransferase activity"/>
    <property type="evidence" value="ECO:0007669"/>
    <property type="project" value="UniProtKB-UniRule"/>
</dbReference>
<dbReference type="GO" id="GO:0008652">
    <property type="term" value="P:amino acid biosynthetic process"/>
    <property type="evidence" value="ECO:0007669"/>
    <property type="project" value="UniProtKB-KW"/>
</dbReference>
<dbReference type="GO" id="GO:0009073">
    <property type="term" value="P:aromatic amino acid family biosynthetic process"/>
    <property type="evidence" value="ECO:0007669"/>
    <property type="project" value="UniProtKB-KW"/>
</dbReference>
<dbReference type="GO" id="GO:0009423">
    <property type="term" value="P:chorismate biosynthetic process"/>
    <property type="evidence" value="ECO:0007669"/>
    <property type="project" value="UniProtKB-UniRule"/>
</dbReference>
<dbReference type="CDD" id="cd01556">
    <property type="entry name" value="EPSP_synthase"/>
    <property type="match status" value="1"/>
</dbReference>
<dbReference type="FunFam" id="3.65.10.10:FF:000010">
    <property type="entry name" value="3-phosphoshikimate 1-carboxyvinyltransferase"/>
    <property type="match status" value="1"/>
</dbReference>
<dbReference type="FunFam" id="3.65.10.10:FF:000011">
    <property type="entry name" value="3-phosphoshikimate 1-carboxyvinyltransferase"/>
    <property type="match status" value="1"/>
</dbReference>
<dbReference type="Gene3D" id="3.65.10.10">
    <property type="entry name" value="Enolpyruvate transferase domain"/>
    <property type="match status" value="2"/>
</dbReference>
<dbReference type="HAMAP" id="MF_00210">
    <property type="entry name" value="EPSP_synth"/>
    <property type="match status" value="1"/>
</dbReference>
<dbReference type="InterPro" id="IPR001986">
    <property type="entry name" value="Enolpyruvate_Tfrase_dom"/>
</dbReference>
<dbReference type="InterPro" id="IPR036968">
    <property type="entry name" value="Enolpyruvate_Tfrase_sf"/>
</dbReference>
<dbReference type="InterPro" id="IPR006264">
    <property type="entry name" value="EPSP_synthase"/>
</dbReference>
<dbReference type="InterPro" id="IPR023193">
    <property type="entry name" value="EPSP_synthase_CS"/>
</dbReference>
<dbReference type="InterPro" id="IPR013792">
    <property type="entry name" value="RNA3'P_cycl/enolpyr_Trfase_a/b"/>
</dbReference>
<dbReference type="NCBIfam" id="TIGR01356">
    <property type="entry name" value="aroA"/>
    <property type="match status" value="1"/>
</dbReference>
<dbReference type="PANTHER" id="PTHR21090">
    <property type="entry name" value="AROM/DEHYDROQUINATE SYNTHASE"/>
    <property type="match status" value="1"/>
</dbReference>
<dbReference type="PANTHER" id="PTHR21090:SF5">
    <property type="entry name" value="PENTAFUNCTIONAL AROM POLYPEPTIDE"/>
    <property type="match status" value="1"/>
</dbReference>
<dbReference type="Pfam" id="PF00275">
    <property type="entry name" value="EPSP_synthase"/>
    <property type="match status" value="1"/>
</dbReference>
<dbReference type="PIRSF" id="PIRSF000505">
    <property type="entry name" value="EPSPS"/>
    <property type="match status" value="1"/>
</dbReference>
<dbReference type="SUPFAM" id="SSF55205">
    <property type="entry name" value="EPT/RTPC-like"/>
    <property type="match status" value="1"/>
</dbReference>
<dbReference type="PROSITE" id="PS00104">
    <property type="entry name" value="EPSP_SYNTHASE_1"/>
    <property type="match status" value="1"/>
</dbReference>
<dbReference type="PROSITE" id="PS00885">
    <property type="entry name" value="EPSP_SYNTHASE_2"/>
    <property type="match status" value="1"/>
</dbReference>
<protein>
    <recommendedName>
        <fullName evidence="1">3-phosphoshikimate 1-carboxyvinyltransferase</fullName>
        <ecNumber evidence="1">2.5.1.19</ecNumber>
    </recommendedName>
    <alternativeName>
        <fullName evidence="1">5-enolpyruvylshikimate-3-phosphate synthase</fullName>
        <shortName evidence="1">EPSP synthase</shortName>
        <shortName evidence="1">EPSPS</shortName>
    </alternativeName>
</protein>
<sequence>MDHVSLSLWSAPRAQAPVDAVVTLPGSKSITNRALILAALADGPSTITGALRSRDADLMIAALRDLGIGVEEAGDPTTLRITPGPLRGGEVDCGLAGTVMRFLPPLAAMADGIVRFDGDEQARTRPLGTILEALRGLGARIEGDALPFTVTGTGSLRGGTVTIDASGSSQFVSGLLLSAAAFEEGVTVHHDGKPVPSMPHIDMTVEMLRQSGVSVTTPATGGDADTWRVAPGPVRAVDWAIEPDLSNATPFLAAAAVTGGTVSVPMWPSSTTQPGDAIRGILASMGADVTLADGVLTVRGPEKLRGIDIDLHDVGELTPTVAALAALAEGTSHLRGIAHLRGHETDRLAALADEINKLGGSVTETDDGLTIVPAELHGGQWLSYADHRMATAGAIIGLVVDGVDVDDVGTTAKTLPGFENMWIDMLESSPATPKASF</sequence>